<keyword id="KW-0997">Cell inner membrane</keyword>
<keyword id="KW-1003">Cell membrane</keyword>
<keyword id="KW-0472">Membrane</keyword>
<keyword id="KW-0520">NAD</keyword>
<keyword id="KW-0874">Quinone</keyword>
<keyword id="KW-1278">Translocase</keyword>
<keyword id="KW-0812">Transmembrane</keyword>
<keyword id="KW-1133">Transmembrane helix</keyword>
<keyword id="KW-0813">Transport</keyword>
<keyword id="KW-0830">Ubiquinone</keyword>
<protein>
    <recommendedName>
        <fullName evidence="1">NADH-quinone oxidoreductase subunit K</fullName>
        <ecNumber evidence="1">7.1.1.-</ecNumber>
    </recommendedName>
    <alternativeName>
        <fullName evidence="1">NADH dehydrogenase I subunit K</fullName>
    </alternativeName>
    <alternativeName>
        <fullName evidence="1">NDH-1 subunit K</fullName>
    </alternativeName>
</protein>
<gene>
    <name evidence="1" type="primary">nuoK</name>
    <name type="ordered locus">HPP12_1236</name>
</gene>
<proteinExistence type="inferred from homology"/>
<evidence type="ECO:0000255" key="1">
    <source>
        <dbReference type="HAMAP-Rule" id="MF_01456"/>
    </source>
</evidence>
<sequence length="100" mass="11009">MIGLNHYLIVSGLLFCIGLAGMLKRKNILLLFFSTEIMLNAINIGFVAISKYTHNLDGQMFALFIIAIAASEVAIGLGLVILWFKKYKSLDIDSLNAMKG</sequence>
<accession>B6JNB0</accession>
<organism>
    <name type="scientific">Helicobacter pylori (strain P12)</name>
    <dbReference type="NCBI Taxonomy" id="570508"/>
    <lineage>
        <taxon>Bacteria</taxon>
        <taxon>Pseudomonadati</taxon>
        <taxon>Campylobacterota</taxon>
        <taxon>Epsilonproteobacteria</taxon>
        <taxon>Campylobacterales</taxon>
        <taxon>Helicobacteraceae</taxon>
        <taxon>Helicobacter</taxon>
    </lineage>
</organism>
<comment type="function">
    <text evidence="1">NDH-1 shuttles electrons from NADH, via FMN and iron-sulfur (Fe-S) centers, to quinones in the respiratory chain. The immediate electron acceptor for the enzyme in this species is believed to be ubiquinone. Couples the redox reaction to proton translocation (for every two electrons transferred, four hydrogen ions are translocated across the cytoplasmic membrane), and thus conserves the redox energy in a proton gradient.</text>
</comment>
<comment type="catalytic activity">
    <reaction evidence="1">
        <text>a quinone + NADH + 5 H(+)(in) = a quinol + NAD(+) + 4 H(+)(out)</text>
        <dbReference type="Rhea" id="RHEA:57888"/>
        <dbReference type="ChEBI" id="CHEBI:15378"/>
        <dbReference type="ChEBI" id="CHEBI:24646"/>
        <dbReference type="ChEBI" id="CHEBI:57540"/>
        <dbReference type="ChEBI" id="CHEBI:57945"/>
        <dbReference type="ChEBI" id="CHEBI:132124"/>
    </reaction>
</comment>
<comment type="subunit">
    <text evidence="1">NDH-1 is composed of 14 different subunits. Subunits NuoA, H, J, K, L, M, N constitute the membrane sector of the complex.</text>
</comment>
<comment type="subcellular location">
    <subcellularLocation>
        <location evidence="1">Cell inner membrane</location>
        <topology evidence="1">Multi-pass membrane protein</topology>
    </subcellularLocation>
</comment>
<comment type="similarity">
    <text evidence="1">Belongs to the complex I subunit 4L family.</text>
</comment>
<name>NUOK_HELP2</name>
<dbReference type="EC" id="7.1.1.-" evidence="1"/>
<dbReference type="EMBL" id="CP001217">
    <property type="protein sequence ID" value="ACJ08388.1"/>
    <property type="molecule type" value="Genomic_DNA"/>
</dbReference>
<dbReference type="SMR" id="B6JNB0"/>
<dbReference type="KEGG" id="hpp:HPP12_1236"/>
<dbReference type="HOGENOM" id="CLU_144724_0_0_7"/>
<dbReference type="Proteomes" id="UP000008198">
    <property type="component" value="Chromosome"/>
</dbReference>
<dbReference type="GO" id="GO:0030964">
    <property type="term" value="C:NADH dehydrogenase complex"/>
    <property type="evidence" value="ECO:0007669"/>
    <property type="project" value="TreeGrafter"/>
</dbReference>
<dbReference type="GO" id="GO:0005886">
    <property type="term" value="C:plasma membrane"/>
    <property type="evidence" value="ECO:0007669"/>
    <property type="project" value="UniProtKB-SubCell"/>
</dbReference>
<dbReference type="GO" id="GO:0050136">
    <property type="term" value="F:NADH:ubiquinone reductase (non-electrogenic) activity"/>
    <property type="evidence" value="ECO:0007669"/>
    <property type="project" value="UniProtKB-UniRule"/>
</dbReference>
<dbReference type="GO" id="GO:0048038">
    <property type="term" value="F:quinone binding"/>
    <property type="evidence" value="ECO:0007669"/>
    <property type="project" value="UniProtKB-KW"/>
</dbReference>
<dbReference type="GO" id="GO:0042773">
    <property type="term" value="P:ATP synthesis coupled electron transport"/>
    <property type="evidence" value="ECO:0007669"/>
    <property type="project" value="InterPro"/>
</dbReference>
<dbReference type="FunFam" id="1.10.287.3510:FF:000001">
    <property type="entry name" value="NADH-quinone oxidoreductase subunit K"/>
    <property type="match status" value="1"/>
</dbReference>
<dbReference type="Gene3D" id="1.10.287.3510">
    <property type="match status" value="1"/>
</dbReference>
<dbReference type="HAMAP" id="MF_01456">
    <property type="entry name" value="NDH1_NuoK"/>
    <property type="match status" value="1"/>
</dbReference>
<dbReference type="InterPro" id="IPR001133">
    <property type="entry name" value="NADH_UbQ_OxRdtase_chain4L/K"/>
</dbReference>
<dbReference type="InterPro" id="IPR039428">
    <property type="entry name" value="NUOK/Mnh_C1-like"/>
</dbReference>
<dbReference type="NCBIfam" id="NF004320">
    <property type="entry name" value="PRK05715.1-2"/>
    <property type="match status" value="1"/>
</dbReference>
<dbReference type="NCBIfam" id="NF004321">
    <property type="entry name" value="PRK05715.1-3"/>
    <property type="match status" value="1"/>
</dbReference>
<dbReference type="NCBIfam" id="NF004323">
    <property type="entry name" value="PRK05715.1-5"/>
    <property type="match status" value="1"/>
</dbReference>
<dbReference type="PANTHER" id="PTHR11434:SF21">
    <property type="entry name" value="NADH DEHYDROGENASE SUBUNIT 4L-RELATED"/>
    <property type="match status" value="1"/>
</dbReference>
<dbReference type="PANTHER" id="PTHR11434">
    <property type="entry name" value="NADH-UBIQUINONE OXIDOREDUCTASE SUBUNIT ND4L"/>
    <property type="match status" value="1"/>
</dbReference>
<dbReference type="Pfam" id="PF00420">
    <property type="entry name" value="Oxidored_q2"/>
    <property type="match status" value="1"/>
</dbReference>
<feature type="chain" id="PRO_0000390095" description="NADH-quinone oxidoreductase subunit K">
    <location>
        <begin position="1"/>
        <end position="100"/>
    </location>
</feature>
<feature type="transmembrane region" description="Helical" evidence="1">
    <location>
        <begin position="1"/>
        <end position="21"/>
    </location>
</feature>
<feature type="transmembrane region" description="Helical" evidence="1">
    <location>
        <begin position="28"/>
        <end position="48"/>
    </location>
</feature>
<feature type="transmembrane region" description="Helical" evidence="1">
    <location>
        <begin position="64"/>
        <end position="84"/>
    </location>
</feature>
<reference key="1">
    <citation type="submission" date="2008-10" db="EMBL/GenBank/DDBJ databases">
        <title>The complete genome sequence of Helicobacter pylori strain P12.</title>
        <authorList>
            <person name="Fischer W."/>
            <person name="Windhager L."/>
            <person name="Karnholz A."/>
            <person name="Zeiller M."/>
            <person name="Zimmer R."/>
            <person name="Haas R."/>
        </authorList>
    </citation>
    <scope>NUCLEOTIDE SEQUENCE [LARGE SCALE GENOMIC DNA]</scope>
    <source>
        <strain>P12</strain>
    </source>
</reference>